<keyword id="KW-0004">4Fe-4S</keyword>
<keyword id="KW-0028">Amino-acid biosynthesis</keyword>
<keyword id="KW-0198">Cysteine biosynthesis</keyword>
<keyword id="KW-0349">Heme</keyword>
<keyword id="KW-0408">Iron</keyword>
<keyword id="KW-0411">Iron-sulfur</keyword>
<keyword id="KW-0479">Metal-binding</keyword>
<keyword id="KW-0521">NADP</keyword>
<keyword id="KW-0560">Oxidoreductase</keyword>
<protein>
    <recommendedName>
        <fullName evidence="1">Sulfite reductase [NADPH] hemoprotein beta-component</fullName>
        <shortName evidence="1">SiR-HP</shortName>
        <shortName evidence="1">SiRHP</shortName>
        <ecNumber evidence="1">1.8.1.2</ecNumber>
    </recommendedName>
</protein>
<reference key="1">
    <citation type="journal article" date="2009" name="Science">
        <title>The dynamics and time scale of ongoing genomic erosion in symbiotic bacteria.</title>
        <authorList>
            <person name="Moran N.A."/>
            <person name="McLaughlin H.J."/>
            <person name="Sorek R."/>
        </authorList>
    </citation>
    <scope>NUCLEOTIDE SEQUENCE [LARGE SCALE GENOMIC DNA]</scope>
    <source>
        <strain>Tuc7</strain>
    </source>
</reference>
<accession>B8D7V7</accession>
<gene>
    <name evidence="1" type="primary">cysI</name>
    <name type="ordered locus">BUAPTUC7_421</name>
</gene>
<sequence>MNKKFKKIVTEKKLTDAERIKENSNYLRGTITDDLKNEITNGFTGDNFSLIRFHGMYQQDDRDLRIERNEQKLEPRYAMMLRCRLPGGVIKAKKWLKIDYFASKYTLYGTIRLTNRQTFQFHGILKKNLKDVHKMLHSIGLDSLATANDVNRNVLCTSNPMESLIHQEAYEWARKISNFLLPHTKAYAEIWLDQKKIVTTEKEPILGKTYLPRKFKTTVVIPPYNDVDLYANDMNFVAITKNEKIIGFNILIGGGLSFIHGNKNTWPFLATEIGYISVENTLSIAKAIVTTQRDWGNRTDRANAKTRYTINNFGLNEFKKEIEKRANVNLKPVREYSFISRGDRFGWIKDINNNWSLTLFIQNGRIYDDNNKLFKSGLLKIANIHDGNFRITSNQNIIISEVSEKNKNKIEKIALSSGLINKSTNLRKNSMACVSFPTCPLAMAEAERMLSFFITQLENIMLKYGVEDEVIILRVSGCPNGCGRSLLAEIGLIGKSIGRYNLYIGGNRIGNRIPKIYKENITEQEILMHLKYLIKTWSNERKNKEDFGDFIVRKEFVKEVINPVYDFWS</sequence>
<dbReference type="EC" id="1.8.1.2" evidence="1"/>
<dbReference type="EMBL" id="CP001158">
    <property type="protein sequence ID" value="ACL30222.1"/>
    <property type="molecule type" value="Genomic_DNA"/>
</dbReference>
<dbReference type="RefSeq" id="WP_012619543.1">
    <property type="nucleotide sequence ID" value="NC_011834.1"/>
</dbReference>
<dbReference type="SMR" id="B8D7V7"/>
<dbReference type="KEGG" id="bau:BUAPTUC7_421"/>
<dbReference type="HOGENOM" id="CLU_001975_3_2_6"/>
<dbReference type="UniPathway" id="UPA00140">
    <property type="reaction ID" value="UER00207"/>
</dbReference>
<dbReference type="GO" id="GO:0009337">
    <property type="term" value="C:sulfite reductase complex (NADPH)"/>
    <property type="evidence" value="ECO:0007669"/>
    <property type="project" value="InterPro"/>
</dbReference>
<dbReference type="GO" id="GO:0051539">
    <property type="term" value="F:4 iron, 4 sulfur cluster binding"/>
    <property type="evidence" value="ECO:0007669"/>
    <property type="project" value="UniProtKB-KW"/>
</dbReference>
<dbReference type="GO" id="GO:0020037">
    <property type="term" value="F:heme binding"/>
    <property type="evidence" value="ECO:0007669"/>
    <property type="project" value="InterPro"/>
</dbReference>
<dbReference type="GO" id="GO:0046872">
    <property type="term" value="F:metal ion binding"/>
    <property type="evidence" value="ECO:0007669"/>
    <property type="project" value="UniProtKB-KW"/>
</dbReference>
<dbReference type="GO" id="GO:0050661">
    <property type="term" value="F:NADP binding"/>
    <property type="evidence" value="ECO:0007669"/>
    <property type="project" value="InterPro"/>
</dbReference>
<dbReference type="GO" id="GO:0050311">
    <property type="term" value="F:sulfite reductase (ferredoxin) activity"/>
    <property type="evidence" value="ECO:0007669"/>
    <property type="project" value="TreeGrafter"/>
</dbReference>
<dbReference type="GO" id="GO:0004783">
    <property type="term" value="F:sulfite reductase (NADPH) activity"/>
    <property type="evidence" value="ECO:0007669"/>
    <property type="project" value="UniProtKB-UniRule"/>
</dbReference>
<dbReference type="GO" id="GO:0019344">
    <property type="term" value="P:cysteine biosynthetic process"/>
    <property type="evidence" value="ECO:0007669"/>
    <property type="project" value="UniProtKB-KW"/>
</dbReference>
<dbReference type="GO" id="GO:0070814">
    <property type="term" value="P:hydrogen sulfide biosynthetic process"/>
    <property type="evidence" value="ECO:0007669"/>
    <property type="project" value="UniProtKB-UniRule"/>
</dbReference>
<dbReference type="GO" id="GO:0000103">
    <property type="term" value="P:sulfate assimilation"/>
    <property type="evidence" value="ECO:0007669"/>
    <property type="project" value="UniProtKB-UniRule"/>
</dbReference>
<dbReference type="FunFam" id="3.30.413.10:FF:000003">
    <property type="entry name" value="Sulfite reductase [NADPH] hemoprotein beta-component"/>
    <property type="match status" value="1"/>
</dbReference>
<dbReference type="FunFam" id="3.30.413.10:FF:000004">
    <property type="entry name" value="Sulfite reductase [NADPH] hemoprotein beta-component"/>
    <property type="match status" value="1"/>
</dbReference>
<dbReference type="Gene3D" id="3.30.413.10">
    <property type="entry name" value="Sulfite Reductase Hemoprotein, domain 1"/>
    <property type="match status" value="2"/>
</dbReference>
<dbReference type="HAMAP" id="MF_01540">
    <property type="entry name" value="CysI"/>
    <property type="match status" value="1"/>
</dbReference>
<dbReference type="InterPro" id="IPR011786">
    <property type="entry name" value="CysI"/>
</dbReference>
<dbReference type="InterPro" id="IPR005117">
    <property type="entry name" value="NiRdtase/SiRdtase_haem-b_fer"/>
</dbReference>
<dbReference type="InterPro" id="IPR036136">
    <property type="entry name" value="Nit/Sulf_reduc_fer-like_dom_sf"/>
</dbReference>
<dbReference type="InterPro" id="IPR006067">
    <property type="entry name" value="NO2/SO3_Rdtase_4Fe4S_dom"/>
</dbReference>
<dbReference type="InterPro" id="IPR045169">
    <property type="entry name" value="NO2/SO3_Rdtase_4Fe4S_prot"/>
</dbReference>
<dbReference type="InterPro" id="IPR045854">
    <property type="entry name" value="NO2/SO3_Rdtase_4Fe4S_sf"/>
</dbReference>
<dbReference type="InterPro" id="IPR006066">
    <property type="entry name" value="NO2/SO3_Rdtase_FeS/sirohaem_BS"/>
</dbReference>
<dbReference type="NCBIfam" id="TIGR02041">
    <property type="entry name" value="CysI"/>
    <property type="match status" value="1"/>
</dbReference>
<dbReference type="NCBIfam" id="NF010029">
    <property type="entry name" value="PRK13504.1"/>
    <property type="match status" value="1"/>
</dbReference>
<dbReference type="PANTHER" id="PTHR11493:SF47">
    <property type="entry name" value="SULFITE REDUCTASE [NADPH] SUBUNIT BETA"/>
    <property type="match status" value="1"/>
</dbReference>
<dbReference type="PANTHER" id="PTHR11493">
    <property type="entry name" value="SULFITE REDUCTASE [NADPH] SUBUNIT BETA-RELATED"/>
    <property type="match status" value="1"/>
</dbReference>
<dbReference type="Pfam" id="PF01077">
    <property type="entry name" value="NIR_SIR"/>
    <property type="match status" value="1"/>
</dbReference>
<dbReference type="Pfam" id="PF03460">
    <property type="entry name" value="NIR_SIR_ferr"/>
    <property type="match status" value="2"/>
</dbReference>
<dbReference type="PRINTS" id="PR00397">
    <property type="entry name" value="SIROHAEM"/>
</dbReference>
<dbReference type="SUPFAM" id="SSF56014">
    <property type="entry name" value="Nitrite and sulphite reductase 4Fe-4S domain-like"/>
    <property type="match status" value="2"/>
</dbReference>
<dbReference type="SUPFAM" id="SSF55124">
    <property type="entry name" value="Nitrite/Sulfite reductase N-terminal domain-like"/>
    <property type="match status" value="2"/>
</dbReference>
<dbReference type="PROSITE" id="PS00365">
    <property type="entry name" value="NIR_SIR"/>
    <property type="match status" value="1"/>
</dbReference>
<comment type="function">
    <text evidence="1">Component of the sulfite reductase complex that catalyzes the 6-electron reduction of sulfite to sulfide. This is one of several activities required for the biosynthesis of L-cysteine from sulfate.</text>
</comment>
<comment type="catalytic activity">
    <reaction evidence="1">
        <text>hydrogen sulfide + 3 NADP(+) + 3 H2O = sulfite + 3 NADPH + 4 H(+)</text>
        <dbReference type="Rhea" id="RHEA:13801"/>
        <dbReference type="ChEBI" id="CHEBI:15377"/>
        <dbReference type="ChEBI" id="CHEBI:15378"/>
        <dbReference type="ChEBI" id="CHEBI:17359"/>
        <dbReference type="ChEBI" id="CHEBI:29919"/>
        <dbReference type="ChEBI" id="CHEBI:57783"/>
        <dbReference type="ChEBI" id="CHEBI:58349"/>
        <dbReference type="EC" id="1.8.1.2"/>
    </reaction>
</comment>
<comment type="cofactor">
    <cofactor evidence="1">
        <name>siroheme</name>
        <dbReference type="ChEBI" id="CHEBI:60052"/>
    </cofactor>
    <text evidence="1">Binds 1 siroheme per subunit.</text>
</comment>
<comment type="cofactor">
    <cofactor evidence="1">
        <name>[4Fe-4S] cluster</name>
        <dbReference type="ChEBI" id="CHEBI:49883"/>
    </cofactor>
    <text evidence="1">Binds 1 [4Fe-4S] cluster per subunit.</text>
</comment>
<comment type="pathway">
    <text evidence="1">Sulfur metabolism; hydrogen sulfide biosynthesis; hydrogen sulfide from sulfite (NADPH route): step 1/1.</text>
</comment>
<comment type="subunit">
    <text evidence="1">Alpha(8)-beta(8). The alpha component is a flavoprotein, the beta component is a hemoprotein.</text>
</comment>
<comment type="similarity">
    <text evidence="1">Belongs to the nitrite and sulfite reductase 4Fe-4S domain family.</text>
</comment>
<proteinExistence type="inferred from homology"/>
<evidence type="ECO:0000255" key="1">
    <source>
        <dbReference type="HAMAP-Rule" id="MF_01540"/>
    </source>
</evidence>
<organism>
    <name type="scientific">Buchnera aphidicola subsp. Acyrthosiphon pisum (strain Tuc7)</name>
    <dbReference type="NCBI Taxonomy" id="561501"/>
    <lineage>
        <taxon>Bacteria</taxon>
        <taxon>Pseudomonadati</taxon>
        <taxon>Pseudomonadota</taxon>
        <taxon>Gammaproteobacteria</taxon>
        <taxon>Enterobacterales</taxon>
        <taxon>Erwiniaceae</taxon>
        <taxon>Buchnera</taxon>
    </lineage>
</organism>
<name>CYSI_BUCAT</name>
<feature type="chain" id="PRO_1000185229" description="Sulfite reductase [NADPH] hemoprotein beta-component">
    <location>
        <begin position="1"/>
        <end position="569"/>
    </location>
</feature>
<feature type="binding site" evidence="1">
    <location>
        <position position="433"/>
    </location>
    <ligand>
        <name>[4Fe-4S] cluster</name>
        <dbReference type="ChEBI" id="CHEBI:49883"/>
    </ligand>
</feature>
<feature type="binding site" evidence="1">
    <location>
        <position position="439"/>
    </location>
    <ligand>
        <name>[4Fe-4S] cluster</name>
        <dbReference type="ChEBI" id="CHEBI:49883"/>
    </ligand>
</feature>
<feature type="binding site" evidence="1">
    <location>
        <position position="478"/>
    </location>
    <ligand>
        <name>[4Fe-4S] cluster</name>
        <dbReference type="ChEBI" id="CHEBI:49883"/>
    </ligand>
</feature>
<feature type="binding site" evidence="1">
    <location>
        <position position="482"/>
    </location>
    <ligand>
        <name>[4Fe-4S] cluster</name>
        <dbReference type="ChEBI" id="CHEBI:49883"/>
    </ligand>
</feature>
<feature type="binding site" description="axial binding residue" evidence="1">
    <location>
        <position position="482"/>
    </location>
    <ligand>
        <name>siroheme</name>
        <dbReference type="ChEBI" id="CHEBI:60052"/>
    </ligand>
    <ligandPart>
        <name>Fe</name>
        <dbReference type="ChEBI" id="CHEBI:18248"/>
    </ligandPart>
</feature>